<dbReference type="EMBL" id="CP001396">
    <property type="protein sequence ID" value="ACR62299.1"/>
    <property type="molecule type" value="Genomic_DNA"/>
</dbReference>
<dbReference type="RefSeq" id="WP_001307143.1">
    <property type="nucleotide sequence ID" value="NC_012759.1"/>
</dbReference>
<dbReference type="SMR" id="C4ZTS5"/>
<dbReference type="KEGG" id="ebw:BWG_1059"/>
<dbReference type="HOGENOM" id="CLU_099590_0_0_6"/>
<dbReference type="Gene3D" id="3.10.450.50">
    <property type="match status" value="1"/>
</dbReference>
<dbReference type="HAMAP" id="MF_00612">
    <property type="entry name" value="UPF0225"/>
    <property type="match status" value="1"/>
</dbReference>
<dbReference type="InterPro" id="IPR032710">
    <property type="entry name" value="NTF2-like_dom_sf"/>
</dbReference>
<dbReference type="InterPro" id="IPR004027">
    <property type="entry name" value="SEC_C_motif"/>
</dbReference>
<dbReference type="InterPro" id="IPR023006">
    <property type="entry name" value="UPF0225"/>
</dbReference>
<dbReference type="InterPro" id="IPR048469">
    <property type="entry name" value="YchJ-like_M"/>
</dbReference>
<dbReference type="NCBIfam" id="NF002449">
    <property type="entry name" value="PRK01617.1"/>
    <property type="match status" value="1"/>
</dbReference>
<dbReference type="NCBIfam" id="NF002486">
    <property type="entry name" value="PRK01752.1"/>
    <property type="match status" value="1"/>
</dbReference>
<dbReference type="PANTHER" id="PTHR33747:SF1">
    <property type="entry name" value="ADENYLATE CYCLASE-ASSOCIATED CAP C-TERMINAL DOMAIN-CONTAINING PROTEIN"/>
    <property type="match status" value="1"/>
</dbReference>
<dbReference type="PANTHER" id="PTHR33747">
    <property type="entry name" value="UPF0225 PROTEIN SCO1677"/>
    <property type="match status" value="1"/>
</dbReference>
<dbReference type="Pfam" id="PF02810">
    <property type="entry name" value="SEC-C"/>
    <property type="match status" value="2"/>
</dbReference>
<dbReference type="Pfam" id="PF17775">
    <property type="entry name" value="YchJ_M-like"/>
    <property type="match status" value="1"/>
</dbReference>
<dbReference type="SUPFAM" id="SSF54427">
    <property type="entry name" value="NTF2-like"/>
    <property type="match status" value="1"/>
</dbReference>
<dbReference type="SUPFAM" id="SSF103642">
    <property type="entry name" value="Sec-C motif"/>
    <property type="match status" value="1"/>
</dbReference>
<proteinExistence type="inferred from homology"/>
<reference key="1">
    <citation type="journal article" date="2009" name="J. Bacteriol.">
        <title>Genomic sequencing reveals regulatory mutations and recombinational events in the widely used MC4100 lineage of Escherichia coli K-12.</title>
        <authorList>
            <person name="Ferenci T."/>
            <person name="Zhou Z."/>
            <person name="Betteridge T."/>
            <person name="Ren Y."/>
            <person name="Liu Y."/>
            <person name="Feng L."/>
            <person name="Reeves P.R."/>
            <person name="Wang L."/>
        </authorList>
    </citation>
    <scope>NUCLEOTIDE SEQUENCE [LARGE SCALE GENOMIC DNA]</scope>
    <source>
        <strain>K12 / MC4100 / BW2952</strain>
    </source>
</reference>
<organism>
    <name type="scientific">Escherichia coli (strain K12 / MC4100 / BW2952)</name>
    <dbReference type="NCBI Taxonomy" id="595496"/>
    <lineage>
        <taxon>Bacteria</taxon>
        <taxon>Pseudomonadati</taxon>
        <taxon>Pseudomonadota</taxon>
        <taxon>Gammaproteobacteria</taxon>
        <taxon>Enterobacterales</taxon>
        <taxon>Enterobacteriaceae</taxon>
        <taxon>Escherichia</taxon>
    </lineage>
</organism>
<protein>
    <recommendedName>
        <fullName evidence="1">UPF0225 protein YchJ</fullName>
    </recommendedName>
</protein>
<accession>C4ZTS5</accession>
<feature type="chain" id="PRO_1000212268" description="UPF0225 protein YchJ">
    <location>
        <begin position="1"/>
        <end position="152"/>
    </location>
</feature>
<gene>
    <name evidence="1" type="primary">ychJ</name>
    <name type="ordered locus">BWG_1059</name>
</gene>
<sequence length="152" mass="16990">MSQLCPCGSAVEYSLCCHPYVSGEKVAPDPEHLMRSRYCAFVMQDADYLIKTWHPSCGAAALRAELMAGFAHTEWLGLTVFEHCWQDADNIGFVSFVARFTEGGKTGAIIERSRFLKENGQWYYIDGTRPQFGRNDPCPCGSGKKFKKCCGQ</sequence>
<evidence type="ECO:0000255" key="1">
    <source>
        <dbReference type="HAMAP-Rule" id="MF_00612"/>
    </source>
</evidence>
<name>YCHJ_ECOBW</name>
<comment type="similarity">
    <text evidence="1">Belongs to the UPF0225 family.</text>
</comment>